<sequence length="102" mass="11827">MSHTILLVQQQVKKPESRVWADYETLNQCLEGVCKIYEEQLKQQNPTAPTITYDISQLFKFIDQLADLSCLEFHPATGTYVPHTKDWIKENIYALLRNQAGQ</sequence>
<name>ERH_ECHMU</name>
<gene>
    <name type="primary">ERH</name>
</gene>
<feature type="chain" id="PRO_0000219355" description="Enhancer of rudimentary homolog">
    <location>
        <begin position="1"/>
        <end position="102"/>
    </location>
</feature>
<keyword id="KW-0131">Cell cycle</keyword>
<organism>
    <name type="scientific">Echinococcus multilocularis</name>
    <name type="common">Fox tapeworm</name>
    <dbReference type="NCBI Taxonomy" id="6211"/>
    <lineage>
        <taxon>Eukaryota</taxon>
        <taxon>Metazoa</taxon>
        <taxon>Spiralia</taxon>
        <taxon>Lophotrochozoa</taxon>
        <taxon>Platyhelminthes</taxon>
        <taxon>Cestoda</taxon>
        <taxon>Eucestoda</taxon>
        <taxon>Cyclophyllidea</taxon>
        <taxon>Taeniidae</taxon>
        <taxon>Echinococcus</taxon>
    </lineage>
</organism>
<protein>
    <recommendedName>
        <fullName>Enhancer of rudimentary homolog</fullName>
    </recommendedName>
</protein>
<dbReference type="EMBL" id="AJ292372">
    <property type="protein sequence ID" value="CAC18546.1"/>
    <property type="molecule type" value="mRNA"/>
</dbReference>
<dbReference type="SMR" id="P69099"/>
<dbReference type="eggNOG" id="KOG1766">
    <property type="taxonomic scope" value="Eukaryota"/>
</dbReference>
<dbReference type="OMA" id="ESRTWSD"/>
<dbReference type="OrthoDB" id="7887808at2759"/>
<dbReference type="Gene3D" id="3.30.2260.10">
    <property type="entry name" value="Enhancer of rudimentary"/>
    <property type="match status" value="1"/>
</dbReference>
<dbReference type="InterPro" id="IPR035912">
    <property type="entry name" value="EHR_sf"/>
</dbReference>
<dbReference type="InterPro" id="IPR000781">
    <property type="entry name" value="ERH"/>
</dbReference>
<dbReference type="PANTHER" id="PTHR12373">
    <property type="entry name" value="ENHANCER OF RUDIMENTARY ERH"/>
    <property type="match status" value="1"/>
</dbReference>
<dbReference type="PANTHER" id="PTHR12373:SF0">
    <property type="entry name" value="ENHANCER OF RUDIMENTARY HOMOLOG"/>
    <property type="match status" value="1"/>
</dbReference>
<dbReference type="Pfam" id="PF01133">
    <property type="entry name" value="ER"/>
    <property type="match status" value="1"/>
</dbReference>
<dbReference type="PIRSF" id="PIRSF016393">
    <property type="entry name" value="Enh_rudimentary"/>
    <property type="match status" value="1"/>
</dbReference>
<dbReference type="SUPFAM" id="SSF143875">
    <property type="entry name" value="ERH-like"/>
    <property type="match status" value="1"/>
</dbReference>
<dbReference type="PROSITE" id="PS01290">
    <property type="entry name" value="ER"/>
    <property type="match status" value="1"/>
</dbReference>
<comment type="function">
    <text evidence="1">May have a role in the cell cycle.</text>
</comment>
<comment type="subunit">
    <text evidence="1">Homodimer.</text>
</comment>
<comment type="similarity">
    <text evidence="2">Belongs to the E(R) family.</text>
</comment>
<reference key="1">
    <citation type="journal article" date="2000" name="J. Biol. Chem.">
        <title>mRNA trans-splicing in the human parasitic cestode Echinococcus multilocularis.</title>
        <authorList>
            <person name="Brehm K."/>
            <person name="Jensen K."/>
            <person name="Frosch M."/>
        </authorList>
    </citation>
    <scope>NUCLEOTIDE SEQUENCE [MRNA]</scope>
    <source>
        <strain>H-95</strain>
    </source>
</reference>
<evidence type="ECO:0000250" key="1"/>
<evidence type="ECO:0000305" key="2"/>
<proteinExistence type="inferred from homology"/>
<accession>P69099</accession>
<accession>Q9GP36</accession>